<dbReference type="EMBL" id="AY653733">
    <property type="protein sequence ID" value="AAV51139.1"/>
    <property type="molecule type" value="Genomic_DNA"/>
</dbReference>
<dbReference type="SMR" id="Q5UQX6"/>
<dbReference type="Proteomes" id="UP000001134">
    <property type="component" value="Genome"/>
</dbReference>
<dbReference type="Gene3D" id="2.130.10.10">
    <property type="entry name" value="YVTN repeat-like/Quinoprotein amine dehydrogenase"/>
    <property type="match status" value="1"/>
</dbReference>
<dbReference type="InterPro" id="IPR011044">
    <property type="entry name" value="Quino_amine_DH_bsu"/>
</dbReference>
<dbReference type="InterPro" id="IPR015943">
    <property type="entry name" value="WD40/YVTN_repeat-like_dom_sf"/>
</dbReference>
<dbReference type="SUPFAM" id="SSF50969">
    <property type="entry name" value="YVTN repeat-like/Quinoprotein amine dehydrogenase"/>
    <property type="match status" value="1"/>
</dbReference>
<reference key="1">
    <citation type="journal article" date="2004" name="Science">
        <title>The 1.2-megabase genome sequence of Mimivirus.</title>
        <authorList>
            <person name="Raoult D."/>
            <person name="Audic S."/>
            <person name="Robert C."/>
            <person name="Abergel C."/>
            <person name="Renesto P."/>
            <person name="Ogata H."/>
            <person name="La Scola B."/>
            <person name="Susan M."/>
            <person name="Claverie J.-M."/>
        </authorList>
    </citation>
    <scope>NUCLEOTIDE SEQUENCE [LARGE SCALE GENOMIC DNA]</scope>
    <source>
        <strain>Rowbotham-Bradford</strain>
    </source>
</reference>
<feature type="chain" id="PRO_0000253925" description="Uncharacterized protein R882">
    <location>
        <begin position="1"/>
        <end position="307"/>
    </location>
</feature>
<keyword id="KW-1185">Reference proteome</keyword>
<proteinExistence type="predicted"/>
<name>YR882_MIMIV</name>
<accession>Q5UQX6</accession>
<gene>
    <name type="ordered locus">MIMI_R882</name>
</gene>
<protein>
    <recommendedName>
        <fullName>Uncharacterized protein R882</fullName>
    </recommendedName>
</protein>
<sequence length="307" mass="35939">MIKSNIQDPPFSISRTNLFDFESEKTTNICNGNSDISYSKIHDNLIYVNPSFTESYSRFEKIKMCTFSGEIIKELPISKSPLPKFRHLPSGRYQRKYYKKIIYSPNGKYICCTDYENQGYINIEIIDNKTGYLMRKFECSDDESICFSPNDDLITFTHCNKCFTWDIKSNEKLDEITIMKHNIISIHYISNEKFIIITKKHSLKYIFNSQHYVAIRNICNKESVTIANFGNVIKFFYCPTRNYLVVLKESGINIINPETGKTKKKFVCDTINQYLFDILNKDTNNYCLATISNNNRIISKRIKKLIN</sequence>
<organism>
    <name type="scientific">Acanthamoeba polyphaga mimivirus</name>
    <name type="common">APMV</name>
    <dbReference type="NCBI Taxonomy" id="212035"/>
    <lineage>
        <taxon>Viruses</taxon>
        <taxon>Varidnaviria</taxon>
        <taxon>Bamfordvirae</taxon>
        <taxon>Nucleocytoviricota</taxon>
        <taxon>Megaviricetes</taxon>
        <taxon>Imitervirales</taxon>
        <taxon>Mimiviridae</taxon>
        <taxon>Megamimivirinae</taxon>
        <taxon>Mimivirus</taxon>
        <taxon>Mimivirus bradfordmassiliense</taxon>
    </lineage>
</organism>
<organismHost>
    <name type="scientific">Acanthamoeba polyphaga</name>
    <name type="common">Amoeba</name>
    <dbReference type="NCBI Taxonomy" id="5757"/>
</organismHost>